<dbReference type="EC" id="3.6.1.7"/>
<dbReference type="EMBL" id="CP000014">
    <property type="protein sequence ID" value="AAT93734.1"/>
    <property type="molecule type" value="Genomic_DNA"/>
</dbReference>
<dbReference type="RefSeq" id="WP_011187118.1">
    <property type="nucleotide sequence ID" value="NZ_CP028877.1"/>
</dbReference>
<dbReference type="SMR" id="Q6ASQ0"/>
<dbReference type="GeneID" id="45161643"/>
<dbReference type="KEGG" id="bga:BGB01"/>
<dbReference type="HOGENOM" id="CLU_141932_2_1_12"/>
<dbReference type="OrthoDB" id="9808093at2"/>
<dbReference type="Proteomes" id="UP000002276">
    <property type="component" value="Plasmid cp26"/>
</dbReference>
<dbReference type="GO" id="GO:0003998">
    <property type="term" value="F:acylphosphatase activity"/>
    <property type="evidence" value="ECO:0007669"/>
    <property type="project" value="UniProtKB-EC"/>
</dbReference>
<dbReference type="Gene3D" id="3.30.70.100">
    <property type="match status" value="1"/>
</dbReference>
<dbReference type="InterPro" id="IPR020456">
    <property type="entry name" value="Acylphosphatase"/>
</dbReference>
<dbReference type="InterPro" id="IPR001792">
    <property type="entry name" value="Acylphosphatase-like_dom"/>
</dbReference>
<dbReference type="InterPro" id="IPR036046">
    <property type="entry name" value="Acylphosphatase-like_dom_sf"/>
</dbReference>
<dbReference type="InterPro" id="IPR017968">
    <property type="entry name" value="Acylphosphatase_CS"/>
</dbReference>
<dbReference type="NCBIfam" id="NF011006">
    <property type="entry name" value="PRK14432.1"/>
    <property type="match status" value="1"/>
</dbReference>
<dbReference type="PANTHER" id="PTHR47268">
    <property type="entry name" value="ACYLPHOSPHATASE"/>
    <property type="match status" value="1"/>
</dbReference>
<dbReference type="PANTHER" id="PTHR47268:SF4">
    <property type="entry name" value="ACYLPHOSPHATASE"/>
    <property type="match status" value="1"/>
</dbReference>
<dbReference type="Pfam" id="PF00708">
    <property type="entry name" value="Acylphosphatase"/>
    <property type="match status" value="1"/>
</dbReference>
<dbReference type="SUPFAM" id="SSF54975">
    <property type="entry name" value="Acylphosphatase/BLUF domain-like"/>
    <property type="match status" value="1"/>
</dbReference>
<dbReference type="PROSITE" id="PS00150">
    <property type="entry name" value="ACYLPHOSPHATASE_1"/>
    <property type="match status" value="1"/>
</dbReference>
<dbReference type="PROSITE" id="PS51160">
    <property type="entry name" value="ACYLPHOSPHATASE_3"/>
    <property type="match status" value="1"/>
</dbReference>
<feature type="chain" id="PRO_0000326665" description="Acylphosphatase">
    <location>
        <begin position="1"/>
        <end position="93"/>
    </location>
</feature>
<feature type="domain" description="Acylphosphatase-like" evidence="1">
    <location>
        <begin position="3"/>
        <end position="93"/>
    </location>
</feature>
<feature type="active site" evidence="1">
    <location>
        <position position="18"/>
    </location>
</feature>
<feature type="active site" evidence="1">
    <location>
        <position position="36"/>
    </location>
</feature>
<comment type="catalytic activity">
    <reaction>
        <text>an acyl phosphate + H2O = a carboxylate + phosphate + H(+)</text>
        <dbReference type="Rhea" id="RHEA:14965"/>
        <dbReference type="ChEBI" id="CHEBI:15377"/>
        <dbReference type="ChEBI" id="CHEBI:15378"/>
        <dbReference type="ChEBI" id="CHEBI:29067"/>
        <dbReference type="ChEBI" id="CHEBI:43474"/>
        <dbReference type="ChEBI" id="CHEBI:59918"/>
        <dbReference type="EC" id="3.6.1.7"/>
    </reaction>
</comment>
<comment type="similarity">
    <text evidence="2">Belongs to the acylphosphatase family.</text>
</comment>
<gene>
    <name type="primary">acyP</name>
    <name type="ordered locus">BGB01</name>
</gene>
<proteinExistence type="inferred from homology"/>
<reference key="1">
    <citation type="journal article" date="2004" name="Nucleic Acids Res.">
        <title>Comparative analysis of the Borrelia garinii genome.</title>
        <authorList>
            <person name="Gloeckner G."/>
            <person name="Lehmann R."/>
            <person name="Romualdi A."/>
            <person name="Pradella S."/>
            <person name="Schulte-Spechtel U."/>
            <person name="Schilhabel M."/>
            <person name="Wilske B."/>
            <person name="Suehnel J."/>
            <person name="Platzer M."/>
        </authorList>
    </citation>
    <scope>NUCLEOTIDE SEQUENCE [LARGE SCALE GENOMIC DNA]</scope>
    <source>
        <strain>ATCC BAA-2496 / DSM 23469 / PBi</strain>
    </source>
</reference>
<accession>Q6ASQ0</accession>
<name>ACYP_BORGP</name>
<organism>
    <name type="scientific">Borrelia garinii subsp. bavariensis (strain ATCC BAA-2496 / DSM 23469 / PBi)</name>
    <name type="common">Borreliella bavariensis</name>
    <dbReference type="NCBI Taxonomy" id="290434"/>
    <lineage>
        <taxon>Bacteria</taxon>
        <taxon>Pseudomonadati</taxon>
        <taxon>Spirochaetota</taxon>
        <taxon>Spirochaetia</taxon>
        <taxon>Spirochaetales</taxon>
        <taxon>Borreliaceae</taxon>
        <taxon>Borreliella</taxon>
    </lineage>
</organism>
<evidence type="ECO:0000255" key="1">
    <source>
        <dbReference type="PROSITE-ProRule" id="PRU00520"/>
    </source>
</evidence>
<evidence type="ECO:0000305" key="2"/>
<geneLocation type="plasmid">
    <name>cp26</name>
</geneLocation>
<protein>
    <recommendedName>
        <fullName>Acylphosphatase</fullName>
        <ecNumber>3.6.1.7</ecNumber>
    </recommendedName>
    <alternativeName>
        <fullName>Acylphosphate phosphohydrolase</fullName>
    </alternativeName>
</protein>
<sequence length="93" mass="11174">MYKQQYFISGKVQGVGFRFFTEQIANNMKLKGFVKNLNDGRVEIVAFFNTNEQMKKFEKLLKNGNKYSNIENIEKKTLDENYPFQFNNFKIYY</sequence>
<keyword id="KW-0378">Hydrolase</keyword>
<keyword id="KW-0614">Plasmid</keyword>